<sequence>MRDKIKLVSTAGTGYYYTTTKNKRTMPGKMEIKKFDPKVRQHVIFKEAKIK</sequence>
<evidence type="ECO:0000255" key="1">
    <source>
        <dbReference type="HAMAP-Rule" id="MF_00294"/>
    </source>
</evidence>
<evidence type="ECO:0000305" key="2"/>
<keyword id="KW-1185">Reference proteome</keyword>
<keyword id="KW-0687">Ribonucleoprotein</keyword>
<keyword id="KW-0689">Ribosomal protein</keyword>
<proteinExistence type="inferred from homology"/>
<accession>Q4FQZ9</accession>
<name>RL33_PSYA2</name>
<reference key="1">
    <citation type="journal article" date="2010" name="Appl. Environ. Microbiol.">
        <title>The genome sequence of Psychrobacter arcticus 273-4, a psychroactive Siberian permafrost bacterium, reveals mechanisms for adaptation to low-temperature growth.</title>
        <authorList>
            <person name="Ayala-del-Rio H.L."/>
            <person name="Chain P.S."/>
            <person name="Grzymski J.J."/>
            <person name="Ponder M.A."/>
            <person name="Ivanova N."/>
            <person name="Bergholz P.W."/>
            <person name="Di Bartolo G."/>
            <person name="Hauser L."/>
            <person name="Land M."/>
            <person name="Bakermans C."/>
            <person name="Rodrigues D."/>
            <person name="Klappenbach J."/>
            <person name="Zarka D."/>
            <person name="Larimer F."/>
            <person name="Richardson P."/>
            <person name="Murray A."/>
            <person name="Thomashow M."/>
            <person name="Tiedje J.M."/>
        </authorList>
    </citation>
    <scope>NUCLEOTIDE SEQUENCE [LARGE SCALE GENOMIC DNA]</scope>
    <source>
        <strain>DSM 17307 / VKM B-2377 / 273-4</strain>
    </source>
</reference>
<feature type="chain" id="PRO_0000356619" description="Large ribosomal subunit protein bL33">
    <location>
        <begin position="1"/>
        <end position="51"/>
    </location>
</feature>
<dbReference type="EMBL" id="CP000082">
    <property type="protein sequence ID" value="AAZ19559.1"/>
    <property type="molecule type" value="Genomic_DNA"/>
</dbReference>
<dbReference type="RefSeq" id="WP_010201403.1">
    <property type="nucleotide sequence ID" value="NC_007204.1"/>
</dbReference>
<dbReference type="SMR" id="Q4FQZ9"/>
<dbReference type="STRING" id="259536.Psyc_1711"/>
<dbReference type="KEGG" id="par:Psyc_1711"/>
<dbReference type="eggNOG" id="COG0267">
    <property type="taxonomic scope" value="Bacteria"/>
</dbReference>
<dbReference type="HOGENOM" id="CLU_190949_1_1_6"/>
<dbReference type="OrthoDB" id="21586at2"/>
<dbReference type="Proteomes" id="UP000000546">
    <property type="component" value="Chromosome"/>
</dbReference>
<dbReference type="GO" id="GO:0022625">
    <property type="term" value="C:cytosolic large ribosomal subunit"/>
    <property type="evidence" value="ECO:0007669"/>
    <property type="project" value="TreeGrafter"/>
</dbReference>
<dbReference type="GO" id="GO:0003735">
    <property type="term" value="F:structural constituent of ribosome"/>
    <property type="evidence" value="ECO:0007669"/>
    <property type="project" value="InterPro"/>
</dbReference>
<dbReference type="GO" id="GO:0006412">
    <property type="term" value="P:translation"/>
    <property type="evidence" value="ECO:0007669"/>
    <property type="project" value="UniProtKB-UniRule"/>
</dbReference>
<dbReference type="FunFam" id="2.20.28.120:FF:000001">
    <property type="entry name" value="50S ribosomal protein L33"/>
    <property type="match status" value="1"/>
</dbReference>
<dbReference type="Gene3D" id="2.20.28.120">
    <property type="entry name" value="Ribosomal protein L33"/>
    <property type="match status" value="1"/>
</dbReference>
<dbReference type="HAMAP" id="MF_00294">
    <property type="entry name" value="Ribosomal_bL33"/>
    <property type="match status" value="1"/>
</dbReference>
<dbReference type="InterPro" id="IPR001705">
    <property type="entry name" value="Ribosomal_bL33"/>
</dbReference>
<dbReference type="InterPro" id="IPR018264">
    <property type="entry name" value="Ribosomal_bL33_CS"/>
</dbReference>
<dbReference type="InterPro" id="IPR038584">
    <property type="entry name" value="Ribosomal_bL33_sf"/>
</dbReference>
<dbReference type="InterPro" id="IPR011332">
    <property type="entry name" value="Ribosomal_zn-bd"/>
</dbReference>
<dbReference type="NCBIfam" id="NF001860">
    <property type="entry name" value="PRK00595.1"/>
    <property type="match status" value="1"/>
</dbReference>
<dbReference type="NCBIfam" id="TIGR01023">
    <property type="entry name" value="rpmG_bact"/>
    <property type="match status" value="1"/>
</dbReference>
<dbReference type="PANTHER" id="PTHR15238">
    <property type="entry name" value="54S RIBOSOMAL PROTEIN L39, MITOCHONDRIAL"/>
    <property type="match status" value="1"/>
</dbReference>
<dbReference type="PANTHER" id="PTHR15238:SF1">
    <property type="entry name" value="LARGE RIBOSOMAL SUBUNIT PROTEIN BL33M"/>
    <property type="match status" value="1"/>
</dbReference>
<dbReference type="Pfam" id="PF00471">
    <property type="entry name" value="Ribosomal_L33"/>
    <property type="match status" value="1"/>
</dbReference>
<dbReference type="SUPFAM" id="SSF57829">
    <property type="entry name" value="Zn-binding ribosomal proteins"/>
    <property type="match status" value="1"/>
</dbReference>
<dbReference type="PROSITE" id="PS00582">
    <property type="entry name" value="RIBOSOMAL_L33"/>
    <property type="match status" value="1"/>
</dbReference>
<organism>
    <name type="scientific">Psychrobacter arcticus (strain DSM 17307 / VKM B-2377 / 273-4)</name>
    <dbReference type="NCBI Taxonomy" id="259536"/>
    <lineage>
        <taxon>Bacteria</taxon>
        <taxon>Pseudomonadati</taxon>
        <taxon>Pseudomonadota</taxon>
        <taxon>Gammaproteobacteria</taxon>
        <taxon>Moraxellales</taxon>
        <taxon>Moraxellaceae</taxon>
        <taxon>Psychrobacter</taxon>
    </lineage>
</organism>
<protein>
    <recommendedName>
        <fullName evidence="1">Large ribosomal subunit protein bL33</fullName>
    </recommendedName>
    <alternativeName>
        <fullName evidence="2">50S ribosomal protein L33</fullName>
    </alternativeName>
</protein>
<comment type="similarity">
    <text evidence="1">Belongs to the bacterial ribosomal protein bL33 family.</text>
</comment>
<gene>
    <name evidence="1" type="primary">rpmG</name>
    <name type="ordered locus">Psyc_1711</name>
</gene>